<sequence length="84" mass="9704">MTDKIRTLQGRVVSDKMEKSIVVAIERFVKHPIYGKFIKRTTKLHVHDENNECGIGDVVEIRECRPLSKTKSWTLVRVVEKAVL</sequence>
<name>RS17_ECO55</name>
<gene>
    <name evidence="1" type="primary">rpsQ</name>
    <name type="ordered locus">EC55989_3727</name>
</gene>
<keyword id="KW-1185">Reference proteome</keyword>
<keyword id="KW-0687">Ribonucleoprotein</keyword>
<keyword id="KW-0689">Ribosomal protein</keyword>
<keyword id="KW-0694">RNA-binding</keyword>
<keyword id="KW-0699">rRNA-binding</keyword>
<organism>
    <name type="scientific">Escherichia coli (strain 55989 / EAEC)</name>
    <dbReference type="NCBI Taxonomy" id="585055"/>
    <lineage>
        <taxon>Bacteria</taxon>
        <taxon>Pseudomonadati</taxon>
        <taxon>Pseudomonadota</taxon>
        <taxon>Gammaproteobacteria</taxon>
        <taxon>Enterobacterales</taxon>
        <taxon>Enterobacteriaceae</taxon>
        <taxon>Escherichia</taxon>
    </lineage>
</organism>
<comment type="function">
    <text evidence="1">One of the primary rRNA binding proteins, it binds specifically to the 5'-end of 16S ribosomal RNA.</text>
</comment>
<comment type="subunit">
    <text evidence="1">Part of the 30S ribosomal subunit.</text>
</comment>
<comment type="similarity">
    <text evidence="1">Belongs to the universal ribosomal protein uS17 family.</text>
</comment>
<feature type="chain" id="PRO_1000166479" description="Small ribosomal subunit protein uS17">
    <location>
        <begin position="1"/>
        <end position="84"/>
    </location>
</feature>
<evidence type="ECO:0000255" key="1">
    <source>
        <dbReference type="HAMAP-Rule" id="MF_01345"/>
    </source>
</evidence>
<evidence type="ECO:0000305" key="2"/>
<reference key="1">
    <citation type="journal article" date="2009" name="PLoS Genet.">
        <title>Organised genome dynamics in the Escherichia coli species results in highly diverse adaptive paths.</title>
        <authorList>
            <person name="Touchon M."/>
            <person name="Hoede C."/>
            <person name="Tenaillon O."/>
            <person name="Barbe V."/>
            <person name="Baeriswyl S."/>
            <person name="Bidet P."/>
            <person name="Bingen E."/>
            <person name="Bonacorsi S."/>
            <person name="Bouchier C."/>
            <person name="Bouvet O."/>
            <person name="Calteau A."/>
            <person name="Chiapello H."/>
            <person name="Clermont O."/>
            <person name="Cruveiller S."/>
            <person name="Danchin A."/>
            <person name="Diard M."/>
            <person name="Dossat C."/>
            <person name="Karoui M.E."/>
            <person name="Frapy E."/>
            <person name="Garry L."/>
            <person name="Ghigo J.M."/>
            <person name="Gilles A.M."/>
            <person name="Johnson J."/>
            <person name="Le Bouguenec C."/>
            <person name="Lescat M."/>
            <person name="Mangenot S."/>
            <person name="Martinez-Jehanne V."/>
            <person name="Matic I."/>
            <person name="Nassif X."/>
            <person name="Oztas S."/>
            <person name="Petit M.A."/>
            <person name="Pichon C."/>
            <person name="Rouy Z."/>
            <person name="Ruf C.S."/>
            <person name="Schneider D."/>
            <person name="Tourret J."/>
            <person name="Vacherie B."/>
            <person name="Vallenet D."/>
            <person name="Medigue C."/>
            <person name="Rocha E.P.C."/>
            <person name="Denamur E."/>
        </authorList>
    </citation>
    <scope>NUCLEOTIDE SEQUENCE [LARGE SCALE GENOMIC DNA]</scope>
    <source>
        <strain>55989 / EAEC</strain>
    </source>
</reference>
<protein>
    <recommendedName>
        <fullName evidence="1">Small ribosomal subunit protein uS17</fullName>
    </recommendedName>
    <alternativeName>
        <fullName evidence="2">30S ribosomal protein S17</fullName>
    </alternativeName>
</protein>
<proteinExistence type="inferred from homology"/>
<accession>B7L4K0</accession>
<dbReference type="EMBL" id="CU928145">
    <property type="protein sequence ID" value="CAV00022.1"/>
    <property type="molecule type" value="Genomic_DNA"/>
</dbReference>
<dbReference type="RefSeq" id="WP_000130100.1">
    <property type="nucleotide sequence ID" value="NZ_CP028304.1"/>
</dbReference>
<dbReference type="SMR" id="B7L4K0"/>
<dbReference type="GeneID" id="93778676"/>
<dbReference type="KEGG" id="eck:EC55989_3727"/>
<dbReference type="HOGENOM" id="CLU_073626_1_1_6"/>
<dbReference type="Proteomes" id="UP000000746">
    <property type="component" value="Chromosome"/>
</dbReference>
<dbReference type="GO" id="GO:0022627">
    <property type="term" value="C:cytosolic small ribosomal subunit"/>
    <property type="evidence" value="ECO:0007669"/>
    <property type="project" value="TreeGrafter"/>
</dbReference>
<dbReference type="GO" id="GO:0019843">
    <property type="term" value="F:rRNA binding"/>
    <property type="evidence" value="ECO:0007669"/>
    <property type="project" value="UniProtKB-UniRule"/>
</dbReference>
<dbReference type="GO" id="GO:0003735">
    <property type="term" value="F:structural constituent of ribosome"/>
    <property type="evidence" value="ECO:0007669"/>
    <property type="project" value="InterPro"/>
</dbReference>
<dbReference type="GO" id="GO:0006412">
    <property type="term" value="P:translation"/>
    <property type="evidence" value="ECO:0007669"/>
    <property type="project" value="UniProtKB-UniRule"/>
</dbReference>
<dbReference type="CDD" id="cd00364">
    <property type="entry name" value="Ribosomal_uS17"/>
    <property type="match status" value="1"/>
</dbReference>
<dbReference type="FunFam" id="2.40.50.140:FF:000014">
    <property type="entry name" value="30S ribosomal protein S17"/>
    <property type="match status" value="1"/>
</dbReference>
<dbReference type="Gene3D" id="2.40.50.140">
    <property type="entry name" value="Nucleic acid-binding proteins"/>
    <property type="match status" value="1"/>
</dbReference>
<dbReference type="HAMAP" id="MF_01345_B">
    <property type="entry name" value="Ribosomal_uS17_B"/>
    <property type="match status" value="1"/>
</dbReference>
<dbReference type="InterPro" id="IPR012340">
    <property type="entry name" value="NA-bd_OB-fold"/>
</dbReference>
<dbReference type="InterPro" id="IPR000266">
    <property type="entry name" value="Ribosomal_uS17"/>
</dbReference>
<dbReference type="InterPro" id="IPR019984">
    <property type="entry name" value="Ribosomal_uS17_bact/chlr"/>
</dbReference>
<dbReference type="InterPro" id="IPR019979">
    <property type="entry name" value="Ribosomal_uS17_CS"/>
</dbReference>
<dbReference type="NCBIfam" id="NF004123">
    <property type="entry name" value="PRK05610.1"/>
    <property type="match status" value="1"/>
</dbReference>
<dbReference type="NCBIfam" id="TIGR03635">
    <property type="entry name" value="uS17_bact"/>
    <property type="match status" value="1"/>
</dbReference>
<dbReference type="PANTHER" id="PTHR10744">
    <property type="entry name" value="40S RIBOSOMAL PROTEIN S11 FAMILY MEMBER"/>
    <property type="match status" value="1"/>
</dbReference>
<dbReference type="PANTHER" id="PTHR10744:SF1">
    <property type="entry name" value="SMALL RIBOSOMAL SUBUNIT PROTEIN US17M"/>
    <property type="match status" value="1"/>
</dbReference>
<dbReference type="Pfam" id="PF00366">
    <property type="entry name" value="Ribosomal_S17"/>
    <property type="match status" value="1"/>
</dbReference>
<dbReference type="PRINTS" id="PR00973">
    <property type="entry name" value="RIBOSOMALS17"/>
</dbReference>
<dbReference type="SUPFAM" id="SSF50249">
    <property type="entry name" value="Nucleic acid-binding proteins"/>
    <property type="match status" value="1"/>
</dbReference>
<dbReference type="PROSITE" id="PS00056">
    <property type="entry name" value="RIBOSOMAL_S17"/>
    <property type="match status" value="1"/>
</dbReference>